<comment type="function">
    <text evidence="2">Involved in D-altritol catabolism. Catalyzes the oxidation of D-altritol to D-tagatose.</text>
</comment>
<comment type="catalytic activity">
    <reaction evidence="2">
        <text>D-altritol + NAD(+) = keto-D-tagatose + NADH + H(+)</text>
        <dbReference type="Rhea" id="RHEA:51708"/>
        <dbReference type="ChEBI" id="CHEBI:15378"/>
        <dbReference type="ChEBI" id="CHEBI:47693"/>
        <dbReference type="ChEBI" id="CHEBI:57540"/>
        <dbReference type="ChEBI" id="CHEBI:57945"/>
        <dbReference type="ChEBI" id="CHEBI:134311"/>
        <dbReference type="EC" id="1.1.1.407"/>
    </reaction>
</comment>
<comment type="cofactor">
    <cofactor evidence="1">
        <name>Zn(2+)</name>
        <dbReference type="ChEBI" id="CHEBI:29105"/>
    </cofactor>
    <text evidence="1">Binds 2 Zn(2+) ions per subunit.</text>
</comment>
<comment type="biophysicochemical properties">
    <kinetics>
        <KM evidence="2">1.4 mM for D-altritol</KM>
        <text evidence="2">kcat is 1.9 sec(-1).</text>
    </kinetics>
</comment>
<comment type="pathway">
    <text evidence="2">Carbohydrate metabolism.</text>
</comment>
<comment type="induction">
    <text evidence="2">Up-regulated by growth on D-altritol or galactitol.</text>
</comment>
<comment type="disruption phenotype">
    <text evidence="2">Deletion mutant cannot grow on D-altritol. Does not exhibit a growth defect when grown on D-galactitol.</text>
</comment>
<comment type="similarity">
    <text evidence="3">Belongs to the zinc-containing alcohol dehydrogenase family.</text>
</comment>
<proteinExistence type="evidence at protein level"/>
<name>ATRDH_AGRFC</name>
<gene>
    <name evidence="4" type="ordered locus">Atu3163</name>
</gene>
<keyword id="KW-0119">Carbohydrate metabolism</keyword>
<keyword id="KW-0479">Metal-binding</keyword>
<keyword id="KW-0520">NAD</keyword>
<keyword id="KW-0560">Oxidoreductase</keyword>
<keyword id="KW-1185">Reference proteome</keyword>
<keyword id="KW-0862">Zinc</keyword>
<feature type="chain" id="PRO_0000446635" description="D-altritol 5-dehydrogenase">
    <location>
        <begin position="1"/>
        <end position="336"/>
    </location>
</feature>
<feature type="binding site" evidence="1">
    <location>
        <position position="37"/>
    </location>
    <ligand>
        <name>Zn(2+)</name>
        <dbReference type="ChEBI" id="CHEBI:29105"/>
        <label>1</label>
        <note>catalytic</note>
    </ligand>
</feature>
<feature type="binding site" evidence="1">
    <location>
        <position position="59"/>
    </location>
    <ligand>
        <name>Zn(2+)</name>
        <dbReference type="ChEBI" id="CHEBI:29105"/>
        <label>1</label>
        <note>catalytic</note>
    </ligand>
</feature>
<feature type="binding site" evidence="1">
    <location>
        <position position="60"/>
    </location>
    <ligand>
        <name>Zn(2+)</name>
        <dbReference type="ChEBI" id="CHEBI:29105"/>
        <label>1</label>
        <note>catalytic</note>
    </ligand>
</feature>
<feature type="binding site" evidence="1">
    <location>
        <position position="89"/>
    </location>
    <ligand>
        <name>Zn(2+)</name>
        <dbReference type="ChEBI" id="CHEBI:29105"/>
        <label>2</label>
    </ligand>
</feature>
<feature type="binding site" evidence="1">
    <location>
        <position position="92"/>
    </location>
    <ligand>
        <name>Zn(2+)</name>
        <dbReference type="ChEBI" id="CHEBI:29105"/>
        <label>2</label>
    </ligand>
</feature>
<feature type="binding site" evidence="1">
    <location>
        <position position="95"/>
    </location>
    <ligand>
        <name>Zn(2+)</name>
        <dbReference type="ChEBI" id="CHEBI:29105"/>
        <label>2</label>
    </ligand>
</feature>
<feature type="binding site" evidence="1">
    <location>
        <position position="103"/>
    </location>
    <ligand>
        <name>Zn(2+)</name>
        <dbReference type="ChEBI" id="CHEBI:29105"/>
        <label>2</label>
    </ligand>
</feature>
<dbReference type="EC" id="1.1.1.407" evidence="2"/>
<dbReference type="EMBL" id="AE007870">
    <property type="protein sequence ID" value="AAK90223.2"/>
    <property type="molecule type" value="Genomic_DNA"/>
</dbReference>
<dbReference type="RefSeq" id="NP_357438.2">
    <property type="nucleotide sequence ID" value="NC_003063.2"/>
</dbReference>
<dbReference type="RefSeq" id="WP_010972808.1">
    <property type="nucleotide sequence ID" value="NC_003063.2"/>
</dbReference>
<dbReference type="SMR" id="A9CES3"/>
<dbReference type="STRING" id="176299.Atu3163"/>
<dbReference type="EnsemblBacteria" id="AAK90223">
    <property type="protein sequence ID" value="AAK90223"/>
    <property type="gene ID" value="Atu3163"/>
</dbReference>
<dbReference type="GeneID" id="1134965"/>
<dbReference type="KEGG" id="atu:Atu3163"/>
<dbReference type="PATRIC" id="fig|176299.10.peg.3008"/>
<dbReference type="eggNOG" id="COG1063">
    <property type="taxonomic scope" value="Bacteria"/>
</dbReference>
<dbReference type="HOGENOM" id="CLU_026673_11_0_5"/>
<dbReference type="OrthoDB" id="9809185at2"/>
<dbReference type="PhylomeDB" id="A9CES3"/>
<dbReference type="BioCyc" id="MetaCyc:MONOMER-20147"/>
<dbReference type="BRENDA" id="1.1.1.407">
    <property type="organism ID" value="14964"/>
</dbReference>
<dbReference type="Proteomes" id="UP000000813">
    <property type="component" value="Chromosome linear"/>
</dbReference>
<dbReference type="GO" id="GO:0016491">
    <property type="term" value="F:oxidoreductase activity"/>
    <property type="evidence" value="ECO:0007669"/>
    <property type="project" value="UniProtKB-KW"/>
</dbReference>
<dbReference type="GO" id="GO:0008270">
    <property type="term" value="F:zinc ion binding"/>
    <property type="evidence" value="ECO:0007669"/>
    <property type="project" value="InterPro"/>
</dbReference>
<dbReference type="CDD" id="cd08234">
    <property type="entry name" value="threonine_DH_like"/>
    <property type="match status" value="1"/>
</dbReference>
<dbReference type="Gene3D" id="3.90.180.10">
    <property type="entry name" value="Medium-chain alcohol dehydrogenases, catalytic domain"/>
    <property type="match status" value="1"/>
</dbReference>
<dbReference type="Gene3D" id="3.40.50.720">
    <property type="entry name" value="NAD(P)-binding Rossmann-like Domain"/>
    <property type="match status" value="1"/>
</dbReference>
<dbReference type="InterPro" id="IPR013154">
    <property type="entry name" value="ADH-like_N"/>
</dbReference>
<dbReference type="InterPro" id="IPR002328">
    <property type="entry name" value="ADH_Zn_CS"/>
</dbReference>
<dbReference type="InterPro" id="IPR031640">
    <property type="entry name" value="Glu_dehyd_C"/>
</dbReference>
<dbReference type="InterPro" id="IPR011032">
    <property type="entry name" value="GroES-like_sf"/>
</dbReference>
<dbReference type="InterPro" id="IPR036291">
    <property type="entry name" value="NAD(P)-bd_dom_sf"/>
</dbReference>
<dbReference type="InterPro" id="IPR050129">
    <property type="entry name" value="Zn_alcohol_dh"/>
</dbReference>
<dbReference type="PANTHER" id="PTHR43401">
    <property type="entry name" value="L-THREONINE 3-DEHYDROGENASE"/>
    <property type="match status" value="1"/>
</dbReference>
<dbReference type="PANTHER" id="PTHR43401:SF2">
    <property type="entry name" value="L-THREONINE 3-DEHYDROGENASE"/>
    <property type="match status" value="1"/>
</dbReference>
<dbReference type="Pfam" id="PF08240">
    <property type="entry name" value="ADH_N"/>
    <property type="match status" value="1"/>
</dbReference>
<dbReference type="Pfam" id="PF16912">
    <property type="entry name" value="Glu_dehyd_C"/>
    <property type="match status" value="1"/>
</dbReference>
<dbReference type="SUPFAM" id="SSF50129">
    <property type="entry name" value="GroES-like"/>
    <property type="match status" value="1"/>
</dbReference>
<dbReference type="SUPFAM" id="SSF51735">
    <property type="entry name" value="NAD(P)-binding Rossmann-fold domains"/>
    <property type="match status" value="1"/>
</dbReference>
<dbReference type="PROSITE" id="PS00059">
    <property type="entry name" value="ADH_ZINC"/>
    <property type="match status" value="1"/>
</dbReference>
<evidence type="ECO:0000250" key="1">
    <source>
        <dbReference type="UniProtKB" id="O58389"/>
    </source>
</evidence>
<evidence type="ECO:0000269" key="2">
    <source>
    </source>
</evidence>
<evidence type="ECO:0000305" key="3"/>
<evidence type="ECO:0000312" key="4">
    <source>
        <dbReference type="EMBL" id="AAK90223.2"/>
    </source>
</evidence>
<accession>A9CES3</accession>
<reference key="1">
    <citation type="journal article" date="2001" name="Science">
        <title>The genome of the natural genetic engineer Agrobacterium tumefaciens C58.</title>
        <authorList>
            <person name="Wood D.W."/>
            <person name="Setubal J.C."/>
            <person name="Kaul R."/>
            <person name="Monks D.E."/>
            <person name="Kitajima J.P."/>
            <person name="Okura V.K."/>
            <person name="Zhou Y."/>
            <person name="Chen L."/>
            <person name="Wood G.E."/>
            <person name="Almeida N.F. Jr."/>
            <person name="Woo L."/>
            <person name="Chen Y."/>
            <person name="Paulsen I.T."/>
            <person name="Eisen J.A."/>
            <person name="Karp P.D."/>
            <person name="Bovee D. Sr."/>
            <person name="Chapman P."/>
            <person name="Clendenning J."/>
            <person name="Deatherage G."/>
            <person name="Gillet W."/>
            <person name="Grant C."/>
            <person name="Kutyavin T."/>
            <person name="Levy R."/>
            <person name="Li M.-J."/>
            <person name="McClelland E."/>
            <person name="Palmieri A."/>
            <person name="Raymond C."/>
            <person name="Rouse G."/>
            <person name="Saenphimmachak C."/>
            <person name="Wu Z."/>
            <person name="Romero P."/>
            <person name="Gordon D."/>
            <person name="Zhang S."/>
            <person name="Yoo H."/>
            <person name="Tao Y."/>
            <person name="Biddle P."/>
            <person name="Jung M."/>
            <person name="Krespan W."/>
            <person name="Perry M."/>
            <person name="Gordon-Kamm B."/>
            <person name="Liao L."/>
            <person name="Kim S."/>
            <person name="Hendrick C."/>
            <person name="Zhao Z.-Y."/>
            <person name="Dolan M."/>
            <person name="Chumley F."/>
            <person name="Tingey S.V."/>
            <person name="Tomb J.-F."/>
            <person name="Gordon M.P."/>
            <person name="Olson M.V."/>
            <person name="Nester E.W."/>
        </authorList>
    </citation>
    <scope>NUCLEOTIDE SEQUENCE [LARGE SCALE GENOMIC DNA]</scope>
    <source>
        <strain>C58 / ATCC 33970</strain>
    </source>
</reference>
<reference key="2">
    <citation type="journal article" date="2001" name="Science">
        <title>Genome sequence of the plant pathogen and biotechnology agent Agrobacterium tumefaciens C58.</title>
        <authorList>
            <person name="Goodner B."/>
            <person name="Hinkle G."/>
            <person name="Gattung S."/>
            <person name="Miller N."/>
            <person name="Blanchard M."/>
            <person name="Qurollo B."/>
            <person name="Goldman B.S."/>
            <person name="Cao Y."/>
            <person name="Askenazi M."/>
            <person name="Halling C."/>
            <person name="Mullin L."/>
            <person name="Houmiel K."/>
            <person name="Gordon J."/>
            <person name="Vaudin M."/>
            <person name="Iartchouk O."/>
            <person name="Epp A."/>
            <person name="Liu F."/>
            <person name="Wollam C."/>
            <person name="Allinger M."/>
            <person name="Doughty D."/>
            <person name="Scott C."/>
            <person name="Lappas C."/>
            <person name="Markelz B."/>
            <person name="Flanagan C."/>
            <person name="Crowell C."/>
            <person name="Gurson J."/>
            <person name="Lomo C."/>
            <person name="Sear C."/>
            <person name="Strub G."/>
            <person name="Cielo C."/>
            <person name="Slater S."/>
        </authorList>
    </citation>
    <scope>NUCLEOTIDE SEQUENCE [LARGE SCALE GENOMIC DNA]</scope>
    <source>
        <strain>C58 / ATCC 33970</strain>
    </source>
</reference>
<reference key="3">
    <citation type="journal article" date="2015" name="J. Biol. Chem.">
        <title>ATP-binding cassette (ABC) transport system solute-binding protein-guided identification of novel D-altritol and galactitol catabolic pathways in Agrobacterium tumefaciens C58.</title>
        <authorList>
            <person name="Wichelecki D.J."/>
            <person name="Vetting M.W."/>
            <person name="Chou L."/>
            <person name="Al-Obaidi N."/>
            <person name="Bouvier J.T."/>
            <person name="Almo S.C."/>
            <person name="Gerlt J.A."/>
        </authorList>
    </citation>
    <scope>FUNCTION</scope>
    <scope>CATALYTIC ACTIVITY</scope>
    <scope>BIOPHYSICOCHEMICAL PROPERTIES</scope>
    <scope>PATHWAY</scope>
    <scope>INDUCTION</scope>
    <scope>DISRUPTION PHENOTYPE</scope>
    <source>
        <strain>C58 / ATCC 33970</strain>
    </source>
</reference>
<sequence length="336" mass="35186">MHAIQFVEKGRAVLAELPVADLPPGHALVRVKASGLCHTDIDVLHARYGDGAFPVIPGHEYAGEVAAVASDVTVFKAGDRVVVDPNLPCGTCASCRKGLTNLCSTLKAYGVSHNGGFAEFSVVRADHLHGIGSMPYHVAALAEPLACVVNGMQSAGIGESGVVPENALVFGAGPIGLLLALSLKSRGIATVTMADINESRLAFAQDLGLQTAVSGSEALSRQRKEFDFVADATGIAPVAEAMIPLVADGGTALFFGVCAPDARISVAPFEIFRRQLKLVGSHSLNRNIPQALAILETDGEVMARLVSHRLPLSEMLPFFTKKPSDPATMKVQFAAE</sequence>
<protein>
    <recommendedName>
        <fullName evidence="3">D-altritol 5-dehydrogenase</fullName>
        <ecNumber evidence="2">1.1.1.407</ecNumber>
    </recommendedName>
</protein>
<organism>
    <name type="scientific">Agrobacterium fabrum (strain C58 / ATCC 33970)</name>
    <name type="common">Agrobacterium tumefaciens (strain C58)</name>
    <dbReference type="NCBI Taxonomy" id="176299"/>
    <lineage>
        <taxon>Bacteria</taxon>
        <taxon>Pseudomonadati</taxon>
        <taxon>Pseudomonadota</taxon>
        <taxon>Alphaproteobacteria</taxon>
        <taxon>Hyphomicrobiales</taxon>
        <taxon>Rhizobiaceae</taxon>
        <taxon>Rhizobium/Agrobacterium group</taxon>
        <taxon>Agrobacterium</taxon>
        <taxon>Agrobacterium tumefaciens complex</taxon>
    </lineage>
</organism>